<sequence length="380" mass="41175">MTLIEEILGGKSGESVVRRVDLVYAHDGTMPLIIEAFNKVFATVRARAYIFFDHVYPAPTVKIANLQKEIRDFAKRHRIPVIEGQGISHQLVVEMGLTENSKIVVGADSHTPTLGALGVFAVGMGATDVAVILGLGKTWFRIPESVGVILEGNPSRYVMATDVILHLLSLLKDYDMNYRAVEFFNVPFSLDERLTLTNFVVEANAKTGIIGEEYTGDGYVKELEIELNSLNPLVAKPHNPANVVPVEEVEGTKIDQVFIGSCTNGRFEQISKAAEILEGEKVAVRTIVGPASMNVYKRMIEEGVARKLIEAGAVILPPGCGPCLGRHMGVVGDGEIVLSTTNRNFRGRMGSPNAQIYLSNPITAAVSALYGEITNPEGAI</sequence>
<proteinExistence type="inferred from homology"/>
<comment type="function">
    <text evidence="1">Catalyzes the isomerization between 2-isopropylmalate and 3-isopropylmalate, via the formation of 2-isopropylmaleate.</text>
</comment>
<comment type="catalytic activity">
    <reaction evidence="1">
        <text>(2R,3S)-3-isopropylmalate = (2S)-2-isopropylmalate</text>
        <dbReference type="Rhea" id="RHEA:32287"/>
        <dbReference type="ChEBI" id="CHEBI:1178"/>
        <dbReference type="ChEBI" id="CHEBI:35121"/>
        <dbReference type="EC" id="4.2.1.33"/>
    </reaction>
</comment>
<comment type="cofactor">
    <cofactor evidence="1">
        <name>[4Fe-4S] cluster</name>
        <dbReference type="ChEBI" id="CHEBI:49883"/>
    </cofactor>
    <text evidence="1">Binds 1 [4Fe-4S] cluster per subunit.</text>
</comment>
<comment type="pathway">
    <text evidence="1">Amino-acid biosynthesis; L-leucine biosynthesis; L-leucine from 3-methyl-2-oxobutanoate: step 2/4.</text>
</comment>
<comment type="subunit">
    <text evidence="1">Heterodimer of LeuC and LeuD.</text>
</comment>
<comment type="similarity">
    <text evidence="1">Belongs to the aconitase/IPM isomerase family. LeuC type 2 subfamily.</text>
</comment>
<feature type="chain" id="PRO_0000076881" description="3-isopropylmalate dehydratase large subunit 2">
    <location>
        <begin position="1"/>
        <end position="380"/>
    </location>
</feature>
<feature type="binding site" evidence="1">
    <location>
        <position position="262"/>
    </location>
    <ligand>
        <name>[4Fe-4S] cluster</name>
        <dbReference type="ChEBI" id="CHEBI:49883"/>
    </ligand>
</feature>
<feature type="binding site" evidence="1">
    <location>
        <position position="320"/>
    </location>
    <ligand>
        <name>[4Fe-4S] cluster</name>
        <dbReference type="ChEBI" id="CHEBI:49883"/>
    </ligand>
</feature>
<feature type="binding site" evidence="1">
    <location>
        <position position="323"/>
    </location>
    <ligand>
        <name>[4Fe-4S] cluster</name>
        <dbReference type="ChEBI" id="CHEBI:49883"/>
    </ligand>
</feature>
<evidence type="ECO:0000255" key="1">
    <source>
        <dbReference type="HAMAP-Rule" id="MF_01027"/>
    </source>
</evidence>
<organism>
    <name type="scientific">Pyrococcus furiosus (strain ATCC 43587 / DSM 3638 / JCM 8422 / Vc1)</name>
    <dbReference type="NCBI Taxonomy" id="186497"/>
    <lineage>
        <taxon>Archaea</taxon>
        <taxon>Methanobacteriati</taxon>
        <taxon>Methanobacteriota</taxon>
        <taxon>Thermococci</taxon>
        <taxon>Thermococcales</taxon>
        <taxon>Thermococcaceae</taxon>
        <taxon>Pyrococcus</taxon>
    </lineage>
</organism>
<keyword id="KW-0004">4Fe-4S</keyword>
<keyword id="KW-0028">Amino-acid biosynthesis</keyword>
<keyword id="KW-0100">Branched-chain amino acid biosynthesis</keyword>
<keyword id="KW-0408">Iron</keyword>
<keyword id="KW-0411">Iron-sulfur</keyword>
<keyword id="KW-0432">Leucine biosynthesis</keyword>
<keyword id="KW-0456">Lyase</keyword>
<keyword id="KW-0479">Metal-binding</keyword>
<keyword id="KW-1185">Reference proteome</keyword>
<protein>
    <recommendedName>
        <fullName evidence="1">3-isopropylmalate dehydratase large subunit 2</fullName>
        <ecNumber evidence="1">4.2.1.33</ecNumber>
    </recommendedName>
    <alternativeName>
        <fullName evidence="1">Alpha-IPM isomerase 2</fullName>
        <shortName evidence="1">IPMI 2</shortName>
    </alternativeName>
    <alternativeName>
        <fullName evidence="1">Isopropylmalate isomerase 2</fullName>
    </alternativeName>
</protein>
<reference key="1">
    <citation type="journal article" date="1999" name="Genetics">
        <title>Divergence of the hyperthermophilic archaea Pyrococcus furiosus and P. horikoshii inferred from complete genomic sequences.</title>
        <authorList>
            <person name="Maeder D.L."/>
            <person name="Weiss R.B."/>
            <person name="Dunn D.M."/>
            <person name="Cherry J.L."/>
            <person name="Gonzalez J.M."/>
            <person name="DiRuggiero J."/>
            <person name="Robb F.T."/>
        </authorList>
    </citation>
    <scope>NUCLEOTIDE SEQUENCE [LARGE SCALE GENOMIC DNA]</scope>
    <source>
        <strain>ATCC 43587 / DSM 3638 / JCM 8422 / Vc1</strain>
    </source>
</reference>
<dbReference type="EC" id="4.2.1.33" evidence="1"/>
<dbReference type="EMBL" id="AE009950">
    <property type="protein sequence ID" value="AAL81803.1"/>
    <property type="molecule type" value="Genomic_DNA"/>
</dbReference>
<dbReference type="RefSeq" id="WP_011012825.1">
    <property type="nucleotide sequence ID" value="NZ_CP023154.1"/>
</dbReference>
<dbReference type="SMR" id="Q8U0C0"/>
<dbReference type="STRING" id="186497.PF1679"/>
<dbReference type="PaxDb" id="186497-PF1679"/>
<dbReference type="KEGG" id="pfu:PF1679"/>
<dbReference type="PATRIC" id="fig|186497.12.peg.1746"/>
<dbReference type="eggNOG" id="arCOG01698">
    <property type="taxonomic scope" value="Archaea"/>
</dbReference>
<dbReference type="HOGENOM" id="CLU_006714_3_4_2"/>
<dbReference type="OrthoDB" id="255at2157"/>
<dbReference type="PhylomeDB" id="Q8U0C0"/>
<dbReference type="UniPathway" id="UPA00048">
    <property type="reaction ID" value="UER00071"/>
</dbReference>
<dbReference type="Proteomes" id="UP000001013">
    <property type="component" value="Chromosome"/>
</dbReference>
<dbReference type="GO" id="GO:0003861">
    <property type="term" value="F:3-isopropylmalate dehydratase activity"/>
    <property type="evidence" value="ECO:0007669"/>
    <property type="project" value="UniProtKB-UniRule"/>
</dbReference>
<dbReference type="GO" id="GO:0051539">
    <property type="term" value="F:4 iron, 4 sulfur cluster binding"/>
    <property type="evidence" value="ECO:0007669"/>
    <property type="project" value="UniProtKB-KW"/>
</dbReference>
<dbReference type="GO" id="GO:0046872">
    <property type="term" value="F:metal ion binding"/>
    <property type="evidence" value="ECO:0007669"/>
    <property type="project" value="UniProtKB-KW"/>
</dbReference>
<dbReference type="GO" id="GO:0009098">
    <property type="term" value="P:L-leucine biosynthetic process"/>
    <property type="evidence" value="ECO:0007669"/>
    <property type="project" value="UniProtKB-UniRule"/>
</dbReference>
<dbReference type="Gene3D" id="3.30.499.10">
    <property type="entry name" value="Aconitase, domain 3"/>
    <property type="match status" value="2"/>
</dbReference>
<dbReference type="HAMAP" id="MF_01027">
    <property type="entry name" value="LeuC_type2"/>
    <property type="match status" value="1"/>
</dbReference>
<dbReference type="InterPro" id="IPR015931">
    <property type="entry name" value="Acnase/IPM_dHydase_lsu_aba_1/3"/>
</dbReference>
<dbReference type="InterPro" id="IPR001030">
    <property type="entry name" value="Acoase/IPM_deHydtase_lsu_aba"/>
</dbReference>
<dbReference type="InterPro" id="IPR018136">
    <property type="entry name" value="Aconitase_4Fe-4S_BS"/>
</dbReference>
<dbReference type="InterPro" id="IPR036008">
    <property type="entry name" value="Aconitase_4Fe-4S_dom"/>
</dbReference>
<dbReference type="InterPro" id="IPR011826">
    <property type="entry name" value="HAcnase/IPMdehydase_lsu_prok"/>
</dbReference>
<dbReference type="InterPro" id="IPR050067">
    <property type="entry name" value="IPM_dehydratase_rel_enz"/>
</dbReference>
<dbReference type="NCBIfam" id="TIGR02086">
    <property type="entry name" value="IPMI_arch"/>
    <property type="match status" value="1"/>
</dbReference>
<dbReference type="NCBIfam" id="NF001614">
    <property type="entry name" value="PRK00402.1"/>
    <property type="match status" value="1"/>
</dbReference>
<dbReference type="PANTHER" id="PTHR43822:SF2">
    <property type="entry name" value="HOMOACONITASE, MITOCHONDRIAL"/>
    <property type="match status" value="1"/>
</dbReference>
<dbReference type="PANTHER" id="PTHR43822">
    <property type="entry name" value="HOMOACONITASE, MITOCHONDRIAL-RELATED"/>
    <property type="match status" value="1"/>
</dbReference>
<dbReference type="Pfam" id="PF00330">
    <property type="entry name" value="Aconitase"/>
    <property type="match status" value="2"/>
</dbReference>
<dbReference type="PRINTS" id="PR00415">
    <property type="entry name" value="ACONITASE"/>
</dbReference>
<dbReference type="SUPFAM" id="SSF53732">
    <property type="entry name" value="Aconitase iron-sulfur domain"/>
    <property type="match status" value="1"/>
</dbReference>
<dbReference type="PROSITE" id="PS00450">
    <property type="entry name" value="ACONITASE_1"/>
    <property type="match status" value="1"/>
</dbReference>
<dbReference type="PROSITE" id="PS01244">
    <property type="entry name" value="ACONITASE_2"/>
    <property type="match status" value="1"/>
</dbReference>
<name>LEUC2_PYRFU</name>
<accession>Q8U0C0</accession>
<gene>
    <name evidence="1" type="primary">leuC2</name>
    <name type="ordered locus">PF1679</name>
</gene>